<reference key="1">
    <citation type="journal article" date="2008" name="BMC Genomics">
        <title>The missing link: Bordetella petrii is endowed with both the metabolic versatility of environmental bacteria and virulence traits of pathogenic Bordetellae.</title>
        <authorList>
            <person name="Gross R."/>
            <person name="Guzman C.A."/>
            <person name="Sebaihia M."/>
            <person name="Martin dos Santos V.A.P."/>
            <person name="Pieper D.H."/>
            <person name="Koebnik R."/>
            <person name="Lechner M."/>
            <person name="Bartels D."/>
            <person name="Buhrmester J."/>
            <person name="Choudhuri J.V."/>
            <person name="Ebensen T."/>
            <person name="Gaigalat L."/>
            <person name="Herrmann S."/>
            <person name="Khachane A.N."/>
            <person name="Larisch C."/>
            <person name="Link S."/>
            <person name="Linke B."/>
            <person name="Meyer F."/>
            <person name="Mormann S."/>
            <person name="Nakunst D."/>
            <person name="Rueckert C."/>
            <person name="Schneiker-Bekel S."/>
            <person name="Schulze K."/>
            <person name="Voerholter F.-J."/>
            <person name="Yevsa T."/>
            <person name="Engle J.T."/>
            <person name="Goldman W.E."/>
            <person name="Puehler A."/>
            <person name="Goebel U.B."/>
            <person name="Goesmann A."/>
            <person name="Bloecker H."/>
            <person name="Kaiser O."/>
            <person name="Martinez-Arias R."/>
        </authorList>
    </citation>
    <scope>NUCLEOTIDE SEQUENCE [LARGE SCALE GENOMIC DNA]</scope>
    <source>
        <strain>ATCC BAA-461 / DSM 12804 / CCUG 43448</strain>
    </source>
</reference>
<feature type="chain" id="PRO_1000096568" description="Uracil-DNA glycosylase">
    <location>
        <begin position="1"/>
        <end position="254"/>
    </location>
</feature>
<feature type="active site" description="Proton acceptor" evidence="1">
    <location>
        <position position="78"/>
    </location>
</feature>
<proteinExistence type="inferred from homology"/>
<sequence length="254" mass="27378">MPHDNRLQTNTLAAQAAELPPAWQAALQAPAVARALAGVIAHIEQRLAEGAVVYPATPFRALQGLSPADVRVVILGQDPYHGPGQAQGLAFSVPDDCKRPPSLRNIFSQIAQEFTGAPLPRGNDLTRWTRQGVLLLNTSLTVEDGQPASHARRGWETVTDALISLVARDSTPKAFLLWGAHAQAKQVLLPDHSGHLVLKANHPSPLSARRPPAPFLGCGHFARVNAWLAEQGKTPIDWITEENEGDVRQGEFGL</sequence>
<evidence type="ECO:0000255" key="1">
    <source>
        <dbReference type="HAMAP-Rule" id="MF_00148"/>
    </source>
</evidence>
<name>UNG_BORPD</name>
<accession>A9IGW1</accession>
<organism>
    <name type="scientific">Bordetella petrii (strain ATCC BAA-461 / DSM 12804 / CCUG 43448)</name>
    <dbReference type="NCBI Taxonomy" id="340100"/>
    <lineage>
        <taxon>Bacteria</taxon>
        <taxon>Pseudomonadati</taxon>
        <taxon>Pseudomonadota</taxon>
        <taxon>Betaproteobacteria</taxon>
        <taxon>Burkholderiales</taxon>
        <taxon>Alcaligenaceae</taxon>
        <taxon>Bordetella</taxon>
    </lineage>
</organism>
<keyword id="KW-0963">Cytoplasm</keyword>
<keyword id="KW-0227">DNA damage</keyword>
<keyword id="KW-0234">DNA repair</keyword>
<keyword id="KW-0378">Hydrolase</keyword>
<dbReference type="EC" id="3.2.2.27" evidence="1"/>
<dbReference type="EMBL" id="AM902716">
    <property type="protein sequence ID" value="CAP45103.1"/>
    <property type="molecule type" value="Genomic_DNA"/>
</dbReference>
<dbReference type="SMR" id="A9IGW1"/>
<dbReference type="STRING" id="94624.Bpet4751"/>
<dbReference type="KEGG" id="bpt:Bpet4751"/>
<dbReference type="eggNOG" id="COG0692">
    <property type="taxonomic scope" value="Bacteria"/>
</dbReference>
<dbReference type="Proteomes" id="UP000001225">
    <property type="component" value="Chromosome"/>
</dbReference>
<dbReference type="GO" id="GO:0005737">
    <property type="term" value="C:cytoplasm"/>
    <property type="evidence" value="ECO:0007669"/>
    <property type="project" value="UniProtKB-SubCell"/>
</dbReference>
<dbReference type="GO" id="GO:0004844">
    <property type="term" value="F:uracil DNA N-glycosylase activity"/>
    <property type="evidence" value="ECO:0007669"/>
    <property type="project" value="UniProtKB-UniRule"/>
</dbReference>
<dbReference type="GO" id="GO:0097510">
    <property type="term" value="P:base-excision repair, AP site formation via deaminated base removal"/>
    <property type="evidence" value="ECO:0007669"/>
    <property type="project" value="TreeGrafter"/>
</dbReference>
<dbReference type="CDD" id="cd10027">
    <property type="entry name" value="UDG-F1-like"/>
    <property type="match status" value="1"/>
</dbReference>
<dbReference type="Gene3D" id="3.40.470.10">
    <property type="entry name" value="Uracil-DNA glycosylase-like domain"/>
    <property type="match status" value="1"/>
</dbReference>
<dbReference type="HAMAP" id="MF_00148">
    <property type="entry name" value="UDG"/>
    <property type="match status" value="1"/>
</dbReference>
<dbReference type="InterPro" id="IPR002043">
    <property type="entry name" value="UDG_fam1"/>
</dbReference>
<dbReference type="InterPro" id="IPR018085">
    <property type="entry name" value="Ura-DNA_Glyclase_AS"/>
</dbReference>
<dbReference type="InterPro" id="IPR005122">
    <property type="entry name" value="Uracil-DNA_glycosylase-like"/>
</dbReference>
<dbReference type="InterPro" id="IPR036895">
    <property type="entry name" value="Uracil-DNA_glycosylase-like_sf"/>
</dbReference>
<dbReference type="NCBIfam" id="NF003588">
    <property type="entry name" value="PRK05254.1-1"/>
    <property type="match status" value="1"/>
</dbReference>
<dbReference type="NCBIfam" id="NF003589">
    <property type="entry name" value="PRK05254.1-2"/>
    <property type="match status" value="1"/>
</dbReference>
<dbReference type="NCBIfam" id="NF003591">
    <property type="entry name" value="PRK05254.1-4"/>
    <property type="match status" value="1"/>
</dbReference>
<dbReference type="NCBIfam" id="NF003592">
    <property type="entry name" value="PRK05254.1-5"/>
    <property type="match status" value="1"/>
</dbReference>
<dbReference type="NCBIfam" id="TIGR00628">
    <property type="entry name" value="ung"/>
    <property type="match status" value="1"/>
</dbReference>
<dbReference type="PANTHER" id="PTHR11264">
    <property type="entry name" value="URACIL-DNA GLYCOSYLASE"/>
    <property type="match status" value="1"/>
</dbReference>
<dbReference type="PANTHER" id="PTHR11264:SF0">
    <property type="entry name" value="URACIL-DNA GLYCOSYLASE"/>
    <property type="match status" value="1"/>
</dbReference>
<dbReference type="Pfam" id="PF03167">
    <property type="entry name" value="UDG"/>
    <property type="match status" value="1"/>
</dbReference>
<dbReference type="SMART" id="SM00986">
    <property type="entry name" value="UDG"/>
    <property type="match status" value="1"/>
</dbReference>
<dbReference type="SMART" id="SM00987">
    <property type="entry name" value="UreE_C"/>
    <property type="match status" value="1"/>
</dbReference>
<dbReference type="SUPFAM" id="SSF52141">
    <property type="entry name" value="Uracil-DNA glycosylase-like"/>
    <property type="match status" value="1"/>
</dbReference>
<dbReference type="PROSITE" id="PS00130">
    <property type="entry name" value="U_DNA_GLYCOSYLASE"/>
    <property type="match status" value="1"/>
</dbReference>
<protein>
    <recommendedName>
        <fullName evidence="1">Uracil-DNA glycosylase</fullName>
        <shortName evidence="1">UDG</shortName>
        <ecNumber evidence="1">3.2.2.27</ecNumber>
    </recommendedName>
</protein>
<gene>
    <name evidence="1" type="primary">ung</name>
    <name type="ordered locus">Bpet4751</name>
</gene>
<comment type="function">
    <text evidence="1">Excises uracil residues from the DNA which can arise as a result of misincorporation of dUMP residues by DNA polymerase or due to deamination of cytosine.</text>
</comment>
<comment type="catalytic activity">
    <reaction evidence="1">
        <text>Hydrolyzes single-stranded DNA or mismatched double-stranded DNA and polynucleotides, releasing free uracil.</text>
        <dbReference type="EC" id="3.2.2.27"/>
    </reaction>
</comment>
<comment type="subcellular location">
    <subcellularLocation>
        <location evidence="1">Cytoplasm</location>
    </subcellularLocation>
</comment>
<comment type="similarity">
    <text evidence="1">Belongs to the uracil-DNA glycosylase (UDG) superfamily. UNG family.</text>
</comment>